<feature type="chain" id="PRO_1000083555" description="HTH-type transcriptional regulator BetI">
    <location>
        <begin position="1"/>
        <end position="195"/>
    </location>
</feature>
<feature type="domain" description="HTH tetR-type" evidence="2">
    <location>
        <begin position="8"/>
        <end position="68"/>
    </location>
</feature>
<feature type="DNA-binding region" description="H-T-H motif" evidence="2">
    <location>
        <begin position="31"/>
        <end position="50"/>
    </location>
</feature>
<reference key="1">
    <citation type="journal article" date="2010" name="Genome Biol. Evol.">
        <title>Continuing evolution of Burkholderia mallei through genome reduction and large-scale rearrangements.</title>
        <authorList>
            <person name="Losada L."/>
            <person name="Ronning C.M."/>
            <person name="DeShazer D."/>
            <person name="Woods D."/>
            <person name="Fedorova N."/>
            <person name="Kim H.S."/>
            <person name="Shabalina S.A."/>
            <person name="Pearson T.R."/>
            <person name="Brinkac L."/>
            <person name="Tan P."/>
            <person name="Nandi T."/>
            <person name="Crabtree J."/>
            <person name="Badger J."/>
            <person name="Beckstrom-Sternberg S."/>
            <person name="Saqib M."/>
            <person name="Schutzer S.E."/>
            <person name="Keim P."/>
            <person name="Nierman W.C."/>
        </authorList>
    </citation>
    <scope>NUCLEOTIDE SEQUENCE [LARGE SCALE GENOMIC DNA]</scope>
    <source>
        <strain>NCTC 10247</strain>
    </source>
</reference>
<name>BETI_BURM7</name>
<proteinExistence type="inferred from homology"/>
<accession>A3MEC5</accession>
<gene>
    <name evidence="2" type="primary">betI</name>
    <name type="ordered locus">BMA10247_A1426</name>
</gene>
<keyword id="KW-0238">DNA-binding</keyword>
<keyword id="KW-0678">Repressor</keyword>
<keyword id="KW-0804">Transcription</keyword>
<keyword id="KW-0805">Transcription regulation</keyword>
<organism>
    <name type="scientific">Burkholderia mallei (strain NCTC 10247)</name>
    <dbReference type="NCBI Taxonomy" id="320389"/>
    <lineage>
        <taxon>Bacteria</taxon>
        <taxon>Pseudomonadati</taxon>
        <taxon>Pseudomonadota</taxon>
        <taxon>Betaproteobacteria</taxon>
        <taxon>Burkholderiales</taxon>
        <taxon>Burkholderiaceae</taxon>
        <taxon>Burkholderia</taxon>
        <taxon>pseudomallei group</taxon>
    </lineage>
</organism>
<protein>
    <recommendedName>
        <fullName evidence="2">HTH-type transcriptional regulator BetI</fullName>
    </recommendedName>
</protein>
<sequence>MPKLGMREIRRAQLIDATLRSIDEAGLPGTTLASVAQRANISTGIVSHYFGDKDGLLEATMRHVLRDLWAATTRRRAAASDAPRARLRAVVAANFDDTQISAPVMKTWLAFWSQSMHEPTLRRLQRVNTRRLHSNLCAEFAKTLPRARAREAASGLAALIDGLWLRGALAGEPLDTKAALKLANDYIDQLLAPRV</sequence>
<dbReference type="EMBL" id="CP000547">
    <property type="protein sequence ID" value="ABO03834.1"/>
    <property type="molecule type" value="Genomic_DNA"/>
</dbReference>
<dbReference type="RefSeq" id="WP_004202513.1">
    <property type="nucleotide sequence ID" value="NZ_CP007801.1"/>
</dbReference>
<dbReference type="SMR" id="A3MEC5"/>
<dbReference type="GeneID" id="93063521"/>
<dbReference type="KEGG" id="bmaz:BM44_4498"/>
<dbReference type="KEGG" id="bmn:BMA10247_A1426"/>
<dbReference type="PATRIC" id="fig|320389.8.peg.5138"/>
<dbReference type="UniPathway" id="UPA00529"/>
<dbReference type="GO" id="GO:0003700">
    <property type="term" value="F:DNA-binding transcription factor activity"/>
    <property type="evidence" value="ECO:0007669"/>
    <property type="project" value="UniProtKB-UniRule"/>
</dbReference>
<dbReference type="GO" id="GO:0000976">
    <property type="term" value="F:transcription cis-regulatory region binding"/>
    <property type="evidence" value="ECO:0007669"/>
    <property type="project" value="TreeGrafter"/>
</dbReference>
<dbReference type="GO" id="GO:0019285">
    <property type="term" value="P:glycine betaine biosynthetic process from choline"/>
    <property type="evidence" value="ECO:0007669"/>
    <property type="project" value="UniProtKB-UniRule"/>
</dbReference>
<dbReference type="GO" id="GO:0045892">
    <property type="term" value="P:negative regulation of DNA-templated transcription"/>
    <property type="evidence" value="ECO:0007669"/>
    <property type="project" value="UniProtKB-UniRule"/>
</dbReference>
<dbReference type="Gene3D" id="1.10.357.10">
    <property type="entry name" value="Tetracycline Repressor, domain 2"/>
    <property type="match status" value="1"/>
</dbReference>
<dbReference type="HAMAP" id="MF_00768">
    <property type="entry name" value="HTH_type_BetI"/>
    <property type="match status" value="1"/>
</dbReference>
<dbReference type="InterPro" id="IPR039538">
    <property type="entry name" value="BetI_C"/>
</dbReference>
<dbReference type="InterPro" id="IPR023772">
    <property type="entry name" value="DNA-bd_HTH_TetR-type_CS"/>
</dbReference>
<dbReference type="InterPro" id="IPR009057">
    <property type="entry name" value="Homeodomain-like_sf"/>
</dbReference>
<dbReference type="InterPro" id="IPR050109">
    <property type="entry name" value="HTH-type_TetR-like_transc_reg"/>
</dbReference>
<dbReference type="InterPro" id="IPR001647">
    <property type="entry name" value="HTH_TetR"/>
</dbReference>
<dbReference type="InterPro" id="IPR036271">
    <property type="entry name" value="Tet_transcr_reg_TetR-rel_C_sf"/>
</dbReference>
<dbReference type="InterPro" id="IPR017757">
    <property type="entry name" value="Tscrpt_rep_BetI"/>
</dbReference>
<dbReference type="NCBIfam" id="TIGR03384">
    <property type="entry name" value="betaine_BetI"/>
    <property type="match status" value="1"/>
</dbReference>
<dbReference type="NCBIfam" id="NF001978">
    <property type="entry name" value="PRK00767.1"/>
    <property type="match status" value="1"/>
</dbReference>
<dbReference type="PANTHER" id="PTHR30055:SF234">
    <property type="entry name" value="HTH-TYPE TRANSCRIPTIONAL REGULATOR BETI"/>
    <property type="match status" value="1"/>
</dbReference>
<dbReference type="PANTHER" id="PTHR30055">
    <property type="entry name" value="HTH-TYPE TRANSCRIPTIONAL REGULATOR RUTR"/>
    <property type="match status" value="1"/>
</dbReference>
<dbReference type="Pfam" id="PF13977">
    <property type="entry name" value="TetR_C_6"/>
    <property type="match status" value="1"/>
</dbReference>
<dbReference type="Pfam" id="PF00440">
    <property type="entry name" value="TetR_N"/>
    <property type="match status" value="1"/>
</dbReference>
<dbReference type="SUPFAM" id="SSF46689">
    <property type="entry name" value="Homeodomain-like"/>
    <property type="match status" value="1"/>
</dbReference>
<dbReference type="SUPFAM" id="SSF48498">
    <property type="entry name" value="Tetracyclin repressor-like, C-terminal domain"/>
    <property type="match status" value="1"/>
</dbReference>
<dbReference type="PROSITE" id="PS01081">
    <property type="entry name" value="HTH_TETR_1"/>
    <property type="match status" value="1"/>
</dbReference>
<dbReference type="PROSITE" id="PS50977">
    <property type="entry name" value="HTH_TETR_2"/>
    <property type="match status" value="1"/>
</dbReference>
<comment type="function">
    <text evidence="1">Repressor involved in the biosynthesis of the osmoprotectant glycine betaine. It represses transcription of the choline transporter BetT and the genes of BetAB involved in the synthesis of glycine betaine (By similarity).</text>
</comment>
<comment type="pathway">
    <text>Amine and polyamine biosynthesis; betaine biosynthesis via choline pathway [regulation].</text>
</comment>
<evidence type="ECO:0000250" key="1"/>
<evidence type="ECO:0000255" key="2">
    <source>
        <dbReference type="HAMAP-Rule" id="MF_00768"/>
    </source>
</evidence>